<proteinExistence type="inferred from homology"/>
<dbReference type="EMBL" id="DP000020">
    <property type="protein sequence ID" value="ABB89801.1"/>
    <property type="molecule type" value="Genomic_DNA"/>
</dbReference>
<dbReference type="RefSeq" id="NP_001107614.1">
    <property type="nucleotide sequence ID" value="NM_001114142.1"/>
</dbReference>
<dbReference type="SMR" id="Q2QLA8"/>
<dbReference type="FunCoup" id="Q2QLA8">
    <property type="interactions" value="2541"/>
</dbReference>
<dbReference type="STRING" id="9796.ENSECAP00000019129"/>
<dbReference type="PaxDb" id="9796-ENSECAP00000019129"/>
<dbReference type="PeptideAtlas" id="Q2QLA8"/>
<dbReference type="Ensembl" id="ENSECAT00000023108.2">
    <property type="protein sequence ID" value="ENSECAP00000019129.2"/>
    <property type="gene ID" value="ENSECAG00000021693.4"/>
</dbReference>
<dbReference type="GeneID" id="100071181"/>
<dbReference type="KEGG" id="ecb:100071181"/>
<dbReference type="CTD" id="830"/>
<dbReference type="VGNC" id="VGNC:16050">
    <property type="gene designation" value="CAPZA2"/>
</dbReference>
<dbReference type="GeneTree" id="ENSGT00950000183119"/>
<dbReference type="InParanoid" id="Q2QLA8"/>
<dbReference type="OMA" id="VACIEDH"/>
<dbReference type="OrthoDB" id="340550at2759"/>
<dbReference type="Proteomes" id="UP000002281">
    <property type="component" value="Chromosome 4"/>
</dbReference>
<dbReference type="Bgee" id="ENSECAG00000021693">
    <property type="expression patterns" value="Expressed in gluteus medius and 23 other cell types or tissues"/>
</dbReference>
<dbReference type="ExpressionAtlas" id="Q2QLA8">
    <property type="expression patterns" value="baseline"/>
</dbReference>
<dbReference type="GO" id="GO:0005903">
    <property type="term" value="C:brush border"/>
    <property type="evidence" value="ECO:0007669"/>
    <property type="project" value="Ensembl"/>
</dbReference>
<dbReference type="GO" id="GO:0030863">
    <property type="term" value="C:cortical cytoskeleton"/>
    <property type="evidence" value="ECO:0000318"/>
    <property type="project" value="GO_Central"/>
</dbReference>
<dbReference type="GO" id="GO:0008290">
    <property type="term" value="C:F-actin capping protein complex"/>
    <property type="evidence" value="ECO:0000318"/>
    <property type="project" value="GO_Central"/>
</dbReference>
<dbReference type="GO" id="GO:0016020">
    <property type="term" value="C:membrane"/>
    <property type="evidence" value="ECO:0007669"/>
    <property type="project" value="Ensembl"/>
</dbReference>
<dbReference type="GO" id="GO:0051015">
    <property type="term" value="F:actin filament binding"/>
    <property type="evidence" value="ECO:0000318"/>
    <property type="project" value="GO_Central"/>
</dbReference>
<dbReference type="GO" id="GO:0030036">
    <property type="term" value="P:actin cytoskeleton organization"/>
    <property type="evidence" value="ECO:0000318"/>
    <property type="project" value="GO_Central"/>
</dbReference>
<dbReference type="GO" id="GO:0051016">
    <property type="term" value="P:barbed-end actin filament capping"/>
    <property type="evidence" value="ECO:0000318"/>
    <property type="project" value="GO_Central"/>
</dbReference>
<dbReference type="FunFam" id="3.30.1140.60:FF:000001">
    <property type="entry name" value="F-actin-capping protein subunit alpha"/>
    <property type="match status" value="1"/>
</dbReference>
<dbReference type="FunFam" id="3.90.1150.210:FF:000002">
    <property type="entry name" value="F-actin-capping protein subunit alpha"/>
    <property type="match status" value="1"/>
</dbReference>
<dbReference type="Gene3D" id="3.30.1140.60">
    <property type="entry name" value="F-actin capping protein, alpha subunit"/>
    <property type="match status" value="1"/>
</dbReference>
<dbReference type="Gene3D" id="3.90.1150.210">
    <property type="entry name" value="F-actin capping protein, beta subunit"/>
    <property type="match status" value="1"/>
</dbReference>
<dbReference type="InterPro" id="IPR002189">
    <property type="entry name" value="CapZ_alpha"/>
</dbReference>
<dbReference type="InterPro" id="IPR037282">
    <property type="entry name" value="CapZ_alpha/beta"/>
</dbReference>
<dbReference type="InterPro" id="IPR042276">
    <property type="entry name" value="CapZ_alpha/beta_2"/>
</dbReference>
<dbReference type="InterPro" id="IPR042489">
    <property type="entry name" value="CapZ_alpha_1"/>
</dbReference>
<dbReference type="InterPro" id="IPR017865">
    <property type="entry name" value="F-actin_cap_asu_CS"/>
</dbReference>
<dbReference type="PANTHER" id="PTHR10653">
    <property type="entry name" value="F-ACTIN-CAPPING PROTEIN SUBUNIT ALPHA"/>
    <property type="match status" value="1"/>
</dbReference>
<dbReference type="PANTHER" id="PTHR10653:SF2">
    <property type="entry name" value="F-ACTIN-CAPPING PROTEIN SUBUNIT ALPHA-2"/>
    <property type="match status" value="1"/>
</dbReference>
<dbReference type="Pfam" id="PF01267">
    <property type="entry name" value="F-actin_cap_A"/>
    <property type="match status" value="1"/>
</dbReference>
<dbReference type="PRINTS" id="PR00191">
    <property type="entry name" value="FACTINCAPA"/>
</dbReference>
<dbReference type="SUPFAM" id="SSF90096">
    <property type="entry name" value="Subunits of heterodimeric actin filament capping protein Capz"/>
    <property type="match status" value="1"/>
</dbReference>
<dbReference type="PROSITE" id="PS00748">
    <property type="entry name" value="F_ACTIN_CAPPING_A_1"/>
    <property type="match status" value="1"/>
</dbReference>
<dbReference type="PROSITE" id="PS00749">
    <property type="entry name" value="F_ACTIN_CAPPING_A_2"/>
    <property type="match status" value="1"/>
</dbReference>
<name>CAZA2_HORSE</name>
<organism>
    <name type="scientific">Equus caballus</name>
    <name type="common">Horse</name>
    <dbReference type="NCBI Taxonomy" id="9796"/>
    <lineage>
        <taxon>Eukaryota</taxon>
        <taxon>Metazoa</taxon>
        <taxon>Chordata</taxon>
        <taxon>Craniata</taxon>
        <taxon>Vertebrata</taxon>
        <taxon>Euteleostomi</taxon>
        <taxon>Mammalia</taxon>
        <taxon>Eutheria</taxon>
        <taxon>Laurasiatheria</taxon>
        <taxon>Perissodactyla</taxon>
        <taxon>Equidae</taxon>
        <taxon>Equus</taxon>
    </lineage>
</organism>
<protein>
    <recommendedName>
        <fullName>F-actin-capping protein subunit alpha-2</fullName>
    </recommendedName>
    <alternativeName>
        <fullName>CapZ alpha-2</fullName>
    </alternativeName>
</protein>
<evidence type="ECO:0000250" key="1"/>
<evidence type="ECO:0000250" key="2">
    <source>
        <dbReference type="UniProtKB" id="P47755"/>
    </source>
</evidence>
<evidence type="ECO:0000305" key="3"/>
<sequence>MADLEEQLSDEEKVRIAAKFIIHAPPGEFNEVFNDVRLLLNNDNLLREGAAHAFAQYNLDQFTPVKIEGYEDQVLITEHGDLGNGKFLDPKNRICFKFDHLRKEATDPRPYEAENAVESWRTSVETALRAYVKEHYPNGVCTVYGKKIDGQQTIIACIESHQFQAKNFWNGRWRSEWKFTITPSTAQVVGILKIQVHYYEDGNVQLVSHKDIQDSLTVSNEVQTAKEFIKIVEAAENEYQTAISENYQTMSDTTFKALRRQLPVTRTKIDWNKILSYKIGKEMQNA</sequence>
<comment type="function">
    <text evidence="1">F-actin-capping proteins bind in a Ca(2+)-independent manner to the fast growing ends of actin filaments (barbed end) thereby blocking the exchange of subunits at these ends. Unlike other capping proteins (such as gelsolin and severin), these proteins do not sever actin filaments (By similarity).</text>
</comment>
<comment type="subunit">
    <text evidence="1 2">Component of the F-actin capping complex, composed of a heterodimer of an alpha and a beta subunit. Component of the WASH complex, composed of F-actin-capping protein subunit alpha (CAPZA1, CAPZA2 or CAPZA3), F-actin-capping protein subunit beta (CAPZB), WASHC1, WASHC2, WASHC3, WASHC4 and WASHC5. Interacts with RCSD1/CAPZIP (By similarity). Directly interacts with CRACD; this interaction decreases binding to actin (By similarity).</text>
</comment>
<comment type="similarity">
    <text evidence="3">Belongs to the F-actin-capping protein alpha subunit family.</text>
</comment>
<gene>
    <name type="primary">CAPZA2</name>
</gene>
<keyword id="KW-0007">Acetylation</keyword>
<keyword id="KW-0117">Actin capping</keyword>
<keyword id="KW-0009">Actin-binding</keyword>
<keyword id="KW-0597">Phosphoprotein</keyword>
<keyword id="KW-1185">Reference proteome</keyword>
<accession>Q2QLA8</accession>
<feature type="initiator methionine" description="Removed" evidence="2">
    <location>
        <position position="1"/>
    </location>
</feature>
<feature type="chain" id="PRO_0000226310" description="F-actin-capping protein subunit alpha-2">
    <location>
        <begin position="2"/>
        <end position="286"/>
    </location>
</feature>
<feature type="modified residue" description="N-acetylalanine" evidence="2">
    <location>
        <position position="2"/>
    </location>
</feature>
<feature type="modified residue" description="Phosphoserine" evidence="2">
    <location>
        <position position="9"/>
    </location>
</feature>
<reference key="1">
    <citation type="submission" date="2005-11" db="EMBL/GenBank/DDBJ databases">
        <title>NISC comparative sequencing initiative.</title>
        <authorList>
            <person name="Antonellis A."/>
            <person name="Ayele K."/>
            <person name="Benjamin B."/>
            <person name="Blakesley R.W."/>
            <person name="Boakye A."/>
            <person name="Bouffard G.G."/>
            <person name="Brinkley C."/>
            <person name="Brooks S."/>
            <person name="Chu G."/>
            <person name="Coleman H."/>
            <person name="Engle J."/>
            <person name="Gestole M."/>
            <person name="Greene A."/>
            <person name="Guan X."/>
            <person name="Gupta J."/>
            <person name="Haghighi P."/>
            <person name="Han J."/>
            <person name="Hansen N."/>
            <person name="Ho S.-L."/>
            <person name="Hu P."/>
            <person name="Hunter G."/>
            <person name="Hurle B."/>
            <person name="Idol J.R."/>
            <person name="Kwong P."/>
            <person name="Laric P."/>
            <person name="Larson S."/>
            <person name="Lee-Lin S.-Q."/>
            <person name="Legaspi R."/>
            <person name="Madden M."/>
            <person name="Maduro Q.L."/>
            <person name="Maduro V.B."/>
            <person name="Margulies E.H."/>
            <person name="Masiello C."/>
            <person name="Maskeri B."/>
            <person name="McDowell J."/>
            <person name="Mojidi H.A."/>
            <person name="Mullikin J.C."/>
            <person name="Oestreicher J.S."/>
            <person name="Park M."/>
            <person name="Portnoy M.E."/>
            <person name="Prasad A."/>
            <person name="Puri O."/>
            <person name="Reddix-Dugue N."/>
            <person name="Schandler K."/>
            <person name="Schueler M.G."/>
            <person name="Sison C."/>
            <person name="Stantripop S."/>
            <person name="Stephen E."/>
            <person name="Taye A."/>
            <person name="Thomas J.W."/>
            <person name="Thomas P.J."/>
            <person name="Tsipouri V."/>
            <person name="Ung L."/>
            <person name="Vogt J.L."/>
            <person name="Wetherby K.D."/>
            <person name="Young A."/>
            <person name="Green E.D."/>
        </authorList>
    </citation>
    <scope>NUCLEOTIDE SEQUENCE [LARGE SCALE GENOMIC DNA]</scope>
</reference>